<keyword id="KW-0002">3D-structure</keyword>
<keyword id="KW-0973">c-di-GMP</keyword>
<keyword id="KW-0997">Cell inner membrane</keyword>
<keyword id="KW-1003">Cell membrane</keyword>
<keyword id="KW-0135">Cellulose biosynthesis</keyword>
<keyword id="KW-0903">Direct protein sequencing</keyword>
<keyword id="KW-0328">Glycosyltransferase</keyword>
<keyword id="KW-0472">Membrane</keyword>
<keyword id="KW-0808">Transferase</keyword>
<keyword id="KW-0812">Transmembrane</keyword>
<keyword id="KW-1133">Transmembrane helix</keyword>
<comment type="function">
    <text evidence="4">Bifunctional protein comprised of a catalytic subunit and a regulatory subunit. The catalytic subunit of cellulose synthase polymerizes uridine 5'-diphosphate glucose to cellulose in a processive way. The thick cellulosic mats generated by this enzyme probably provide a specialized protective environment to the bacterium. The regulatory subunit binds bis-(3'-5') cyclic diguanylic acid (c-di-GMP).</text>
</comment>
<comment type="catalytic activity">
    <reaction>
        <text>[(1-&gt;4)-beta-D-glucosyl](n) + UDP-alpha-D-glucose = [(1-&gt;4)-beta-D-glucosyl](n+1) + UDP + H(+)</text>
        <dbReference type="Rhea" id="RHEA:19929"/>
        <dbReference type="Rhea" id="RHEA-COMP:10033"/>
        <dbReference type="Rhea" id="RHEA-COMP:10034"/>
        <dbReference type="ChEBI" id="CHEBI:15378"/>
        <dbReference type="ChEBI" id="CHEBI:18246"/>
        <dbReference type="ChEBI" id="CHEBI:58223"/>
        <dbReference type="ChEBI" id="CHEBI:58885"/>
        <dbReference type="EC" id="2.4.1.12"/>
    </reaction>
</comment>
<comment type="cofactor">
    <cofactor evidence="1">
        <name>Mg(2+)</name>
        <dbReference type="ChEBI" id="CHEBI:18420"/>
    </cofactor>
</comment>
<comment type="activity regulation">
    <text evidence="4">Activated by c-di-GMP.</text>
</comment>
<comment type="pathway">
    <text>Glycan metabolism; bacterial cellulose biosynthesis.</text>
</comment>
<comment type="subcellular location">
    <subcellularLocation>
        <location evidence="5">Cell inner membrane</location>
        <topology evidence="5">Multi-pass membrane protein</topology>
    </subcellularLocation>
</comment>
<comment type="induction">
    <text>Cellulose is produced at a linear rate with respect to cell growth when O(2) is present.</text>
</comment>
<comment type="domain">
    <text>There are two conserved domains in the globular part of the catalytic subunit: the N-terminal domain (domain A) contains the conserved DXD motif and is possibly involved in catalysis and substrate binding. The C-terminal domain (domain B) contains the QXXRW motif and is present only in processive glycosyl transferases. It could be involved in the processivity function of the enzyme, possibly required for holding the growing glycan chain in the active site.</text>
</comment>
<comment type="similarity">
    <text evidence="5">In the N-terminal section; belongs to the glycosyltransferase 2 family.</text>
</comment>
<comment type="similarity">
    <text evidence="5">In the C-terminal section; belongs to the AcsB/BcsB family.</text>
</comment>
<comment type="caution">
    <text evidence="6">Was originally proposed to code for two separate adjacent ORFs, ascA and ascB.</text>
</comment>
<comment type="sequence caution" evidence="5">
    <conflict type="frameshift">
        <sequence resource="EMBL-CDS" id="CAA38487"/>
    </conflict>
</comment>
<comment type="sequence caution" evidence="5">
    <conflict type="frameshift">
        <sequence resource="EMBL-CDS" id="CAA38488"/>
    </conflict>
</comment>
<organism>
    <name type="scientific">Komagataeibacter xylinus</name>
    <name type="common">Gluconacetobacter xylinus</name>
    <dbReference type="NCBI Taxonomy" id="28448"/>
    <lineage>
        <taxon>Bacteria</taxon>
        <taxon>Pseudomonadati</taxon>
        <taxon>Pseudomonadota</taxon>
        <taxon>Alphaproteobacteria</taxon>
        <taxon>Acetobacterales</taxon>
        <taxon>Acetobacteraceae</taxon>
        <taxon>Komagataeibacter</taxon>
    </lineage>
</organism>
<name>ACSA1_KOMXY</name>
<accession>P0CW87</accession>
<accession>P21877</accession>
<accession>P37717</accession>
<protein>
    <recommendedName>
        <fullName>Cellulose synthase 1</fullName>
    </recommendedName>
    <domain>
        <recommendedName>
            <fullName>Cellulose synthase catalytic domain [UDP-forming]</fullName>
            <ecNumber>2.4.1.12</ecNumber>
        </recommendedName>
    </domain>
    <domain>
        <recommendedName>
            <fullName>Cyclic di-GMP-binding domain</fullName>
        </recommendedName>
        <alternativeName>
            <fullName>Cellulose synthase 1 regulatory domain</fullName>
        </alternativeName>
    </domain>
</protein>
<evidence type="ECO:0000250" key="1"/>
<evidence type="ECO:0000255" key="2"/>
<evidence type="ECO:0000256" key="3">
    <source>
        <dbReference type="SAM" id="MobiDB-lite"/>
    </source>
</evidence>
<evidence type="ECO:0000269" key="4">
    <source>
    </source>
</evidence>
<evidence type="ECO:0000305" key="5"/>
<evidence type="ECO:0000305" key="6">
    <source>
    </source>
</evidence>
<evidence type="ECO:0007829" key="7">
    <source>
        <dbReference type="PDB" id="4I86"/>
    </source>
</evidence>
<dbReference type="EC" id="2.4.1.12"/>
<dbReference type="EMBL" id="X54676">
    <property type="protein sequence ID" value="CAA38487.1"/>
    <property type="status" value="ALT_FRAME"/>
    <property type="molecule type" value="Genomic_DNA"/>
</dbReference>
<dbReference type="EMBL" id="X54676">
    <property type="protein sequence ID" value="CAA38488.1"/>
    <property type="status" value="ALT_FRAME"/>
    <property type="molecule type" value="Genomic_DNA"/>
</dbReference>
<dbReference type="PIR" id="S13732">
    <property type="entry name" value="C36963"/>
</dbReference>
<dbReference type="PIR" id="S16266">
    <property type="entry name" value="S16266"/>
</dbReference>
<dbReference type="PDB" id="4I86">
    <property type="method" value="X-ray"/>
    <property type="resolution" value="2.10 A"/>
    <property type="chains" value="A/B=572-670"/>
</dbReference>
<dbReference type="PDBsum" id="4I86"/>
<dbReference type="SMR" id="P0CW87"/>
<dbReference type="UniPathway" id="UPA00694"/>
<dbReference type="EvolutionaryTrace" id="P0CW87"/>
<dbReference type="GO" id="GO:0005886">
    <property type="term" value="C:plasma membrane"/>
    <property type="evidence" value="ECO:0007669"/>
    <property type="project" value="UniProtKB-SubCell"/>
</dbReference>
<dbReference type="GO" id="GO:0016760">
    <property type="term" value="F:cellulose synthase (UDP-forming) activity"/>
    <property type="evidence" value="ECO:0007669"/>
    <property type="project" value="UniProtKB-EC"/>
</dbReference>
<dbReference type="GO" id="GO:0035438">
    <property type="term" value="F:cyclic-di-GMP binding"/>
    <property type="evidence" value="ECO:0007669"/>
    <property type="project" value="InterPro"/>
</dbReference>
<dbReference type="GO" id="GO:0030244">
    <property type="term" value="P:cellulose biosynthetic process"/>
    <property type="evidence" value="ECO:0007669"/>
    <property type="project" value="UniProtKB-KW"/>
</dbReference>
<dbReference type="GO" id="GO:0006011">
    <property type="term" value="P:UDP-alpha-D-glucose metabolic process"/>
    <property type="evidence" value="ECO:0007669"/>
    <property type="project" value="InterPro"/>
</dbReference>
<dbReference type="CDD" id="cd06421">
    <property type="entry name" value="CESA_CelA_like"/>
    <property type="match status" value="1"/>
</dbReference>
<dbReference type="Gene3D" id="2.60.120.260">
    <property type="entry name" value="Galactose-binding domain-like"/>
    <property type="match status" value="2"/>
</dbReference>
<dbReference type="Gene3D" id="2.40.10.220">
    <property type="entry name" value="predicted glycosyltransferase like domains"/>
    <property type="match status" value="1"/>
</dbReference>
<dbReference type="Gene3D" id="3.90.550.10">
    <property type="entry name" value="Spore Coat Polysaccharide Biosynthesis Protein SpsA, Chain A"/>
    <property type="match status" value="1"/>
</dbReference>
<dbReference type="InterPro" id="IPR003919">
    <property type="entry name" value="Cell_synth_A"/>
</dbReference>
<dbReference type="InterPro" id="IPR003920">
    <property type="entry name" value="Cell_synth_B"/>
</dbReference>
<dbReference type="InterPro" id="IPR018513">
    <property type="entry name" value="Cell_synthase_bac"/>
</dbReference>
<dbReference type="InterPro" id="IPR001173">
    <property type="entry name" value="Glyco_trans_2-like"/>
</dbReference>
<dbReference type="InterPro" id="IPR050321">
    <property type="entry name" value="Glycosyltr_2/OpgH_subfam"/>
</dbReference>
<dbReference type="InterPro" id="IPR029044">
    <property type="entry name" value="Nucleotide-diphossugar_trans"/>
</dbReference>
<dbReference type="InterPro" id="IPR009875">
    <property type="entry name" value="PilZ_domain"/>
</dbReference>
<dbReference type="NCBIfam" id="TIGR03030">
    <property type="entry name" value="CelA"/>
    <property type="match status" value="1"/>
</dbReference>
<dbReference type="PANTHER" id="PTHR43867">
    <property type="entry name" value="CELLULOSE SYNTHASE CATALYTIC SUBUNIT A [UDP-FORMING]"/>
    <property type="match status" value="1"/>
</dbReference>
<dbReference type="PANTHER" id="PTHR43867:SF2">
    <property type="entry name" value="CELLULOSE SYNTHASE CATALYTIC SUBUNIT A [UDP-FORMING]"/>
    <property type="match status" value="1"/>
</dbReference>
<dbReference type="Pfam" id="PF03170">
    <property type="entry name" value="BcsB"/>
    <property type="match status" value="1"/>
</dbReference>
<dbReference type="Pfam" id="PF00535">
    <property type="entry name" value="Glycos_transf_2"/>
    <property type="match status" value="1"/>
</dbReference>
<dbReference type="Pfam" id="PF07238">
    <property type="entry name" value="PilZ"/>
    <property type="match status" value="1"/>
</dbReference>
<dbReference type="PRINTS" id="PR01440">
    <property type="entry name" value="CELLSNTHASEB"/>
</dbReference>
<dbReference type="SUPFAM" id="SSF53448">
    <property type="entry name" value="Nucleotide-diphospho-sugar transferases"/>
    <property type="match status" value="1"/>
</dbReference>
<dbReference type="SUPFAM" id="SSF141371">
    <property type="entry name" value="PilZ domain-like"/>
    <property type="match status" value="1"/>
</dbReference>
<gene>
    <name type="primary">acsAB</name>
    <name type="synonym">acsA</name>
    <name type="synonym">acsB</name>
</gene>
<feature type="chain" id="PRO_0000059260" description="Cellulose synthase 1">
    <location>
        <begin position="1"/>
        <end position="1550"/>
    </location>
</feature>
<feature type="transmembrane region" description="Helical" evidence="2">
    <location>
        <begin position="26"/>
        <end position="46"/>
    </location>
</feature>
<feature type="transmembrane region" description="Helical" evidence="2">
    <location>
        <begin position="47"/>
        <end position="67"/>
    </location>
</feature>
<feature type="transmembrane region" description="Helical" evidence="2">
    <location>
        <begin position="106"/>
        <end position="126"/>
    </location>
</feature>
<feature type="transmembrane region" description="Helical" evidence="2">
    <location>
        <begin position="398"/>
        <end position="418"/>
    </location>
</feature>
<feature type="transmembrane region" description="Helical" evidence="2">
    <location>
        <begin position="423"/>
        <end position="443"/>
    </location>
</feature>
<feature type="transmembrane region" description="Helical" evidence="2">
    <location>
        <begin position="468"/>
        <end position="488"/>
    </location>
</feature>
<feature type="transmembrane region" description="Helical" evidence="2">
    <location>
        <begin position="507"/>
        <end position="527"/>
    </location>
</feature>
<feature type="transmembrane region" description="Helical" evidence="2">
    <location>
        <begin position="547"/>
        <end position="567"/>
    </location>
</feature>
<feature type="transmembrane region" description="Helical" evidence="2">
    <location>
        <begin position="1513"/>
        <end position="1533"/>
    </location>
</feature>
<feature type="domain" description="PilZ">
    <location>
        <begin position="572"/>
        <end position="647"/>
    </location>
</feature>
<feature type="region of interest" description="Catalytic">
    <location>
        <begin position="1"/>
        <end position="741"/>
    </location>
</feature>
<feature type="region of interest" description="Catalytic subdomain A">
    <location>
        <begin position="147"/>
        <end position="240"/>
    </location>
</feature>
<feature type="region of interest" description="Catalytic subdomain B">
    <location>
        <begin position="317"/>
        <end position="377"/>
    </location>
</feature>
<feature type="region of interest" description="Disordered" evidence="3">
    <location>
        <begin position="711"/>
        <end position="734"/>
    </location>
</feature>
<feature type="region of interest" description="Cyclic di-GMP binding domain">
    <location>
        <begin position="742"/>
        <end position="1550"/>
    </location>
</feature>
<feature type="region of interest" description="Disordered" evidence="3">
    <location>
        <begin position="768"/>
        <end position="813"/>
    </location>
</feature>
<feature type="compositionally biased region" description="Low complexity" evidence="3">
    <location>
        <begin position="768"/>
        <end position="796"/>
    </location>
</feature>
<feature type="active site" evidence="2">
    <location>
        <position position="189"/>
    </location>
</feature>
<feature type="active site" evidence="2">
    <location>
        <position position="333"/>
    </location>
</feature>
<feature type="binding site" evidence="2">
    <location>
        <position position="236"/>
    </location>
    <ligand>
        <name>substrate</name>
    </ligand>
</feature>
<feature type="binding site" evidence="2">
    <location>
        <position position="238"/>
    </location>
    <ligand>
        <name>substrate</name>
    </ligand>
</feature>
<feature type="strand" evidence="7">
    <location>
        <begin position="584"/>
        <end position="589"/>
    </location>
</feature>
<feature type="strand" evidence="7">
    <location>
        <begin position="595"/>
        <end position="603"/>
    </location>
</feature>
<feature type="strand" evidence="7">
    <location>
        <begin position="605"/>
        <end position="611"/>
    </location>
</feature>
<feature type="strand" evidence="7">
    <location>
        <begin position="622"/>
        <end position="630"/>
    </location>
</feature>
<feature type="strand" evidence="7">
    <location>
        <begin position="633"/>
        <end position="644"/>
    </location>
</feature>
<feature type="strand" evidence="7">
    <location>
        <begin position="649"/>
        <end position="653"/>
    </location>
</feature>
<feature type="helix" evidence="7">
    <location>
        <begin position="658"/>
        <end position="670"/>
    </location>
</feature>
<proteinExistence type="evidence at protein level"/>
<sequence length="1550" mass="168162">MPEVRSSTQSESGMSQWMGKILSIRGAGLTIGVFGLCALIAATSVTLPPEQQLIVAFVCVVIFFIVGHKPSRRSQIFLEVLSGLVSLRYLTWRLTETLSFDTWLQGLLGTMLLVAELYALMMLFLSYFQTIAPLHRAPLPLPPNPDEWPTVDIFVPTYNEELSIVRLTVLGSLGIDWPPEKVRVHILDDGRRPEFAAFAAECGANYIARPTNEHAKAGNLNYAIGHTDGDYILIFDCDHVPTRAFLQLTMGWMVEDPKIALMQTPHHFYSPDPFQRNLSAGYRTPPEGNLFYGVVQDGNDFWDATFFCGSCAILRRTAIEQIGGFATQTVTEDAHTALKMQRLGWSTAYLRIPLAGGLATERLILHIGQRVRWARGMLQIFRIDNPLFGRGLSWGQRLCYLSAMTSFLFAVPRVIFLSSPLAFLFFGQNIIAASPLALLAYAIPHMFHAVGTASKINKGWRYSFWSEVYETTMALFLVRVTIVTLLSPSRGKFNVTDKGGLLEKGYFDLGAVYPNIILGLIMFGGLARGVYELSFGHLDQIAERAYLLNSAWAMLSLIIILAAIAVGRETQQKRNSHRIPATIPVEVANADGSIIVTGVTEDLSMGGAAVKMSWPAKLSGPTPVYIRTVLDGEELILPARIIRAGNGRGIFIWTIDNLQQEFSVIRLVFGRADAWVDWGNYKADRPLLSLMDMVLSVKGLFRSSGDIVHRSSPTKPLAGNALSDDTNNPSRKERVLKGTVKMVSLLALLTFASSAQAASAPRAVAAKAPAHQPEASDLPPLPALLPATSGAAQAGAGDAGANGPGSPTGQPLAADSADALVENAENTSDTATVHNYTLKDLGAAGSITMRGLAPLQGIEFGIPSDQLVTSARLVLSGSMSPNLRPETNSVTMTLNEQYIGTLRPDPAHPTFGPMSFEINPIFFVSGNRLNFNFASGSKGCSDITNDTLWATISQNSQLQITTIALPPRRLLSRLPQPFYDKNVRQHVTVPMVLAQTYDPQILKSAGILASWFGKQTDFLGVTFPVSSTIPQSGNAILIGVADELPTSLGRPQVNGPAVLELPNPSDANATILVVTGRDRDEVITASKGIAFASAPLPTDSHMDVAPVDIAPRKPNDAPSFIAMDHPVRFGDLVTASKLQGTGFTSGVLSVPFRIPPDLYTWRNRPYKMQVRFRSPAGEAKDVEKSRLDVGINEVYLHSYPLRETHGLVGAVLQGVGLARPASGMQVHDLDVPPWTVFGQDQLNFYFDAMPLARGICQSGAANNAFHLGLDPDSTIDFSRAHHIAQMPNLAYMATVGFPFTTYADLSQTAVVLPEHPNAATVGAYLDLMGFMGAATWYPVAGVDIVSADHVSDVADRNLLVISTLATSGEIAPLLSRSSYEVADGHLRTVSHASALDNAIKAVDDPLTAFRDRDSKPQDVDTPLTGGVGAMIEAESPLTAGRTVLALLSSDGAGLNNLLQMLGERKKQANIQGDLVVAHGEDLSSYRTSPVYTIGTLPLWLWPDWYMHNRPVRVLLVGLLGCILIVSVLARALARHATRRFKQLEDERRKS</sequence>
<reference key="1">
    <citation type="journal article" date="1990" name="Plant Mol. Biol.">
        <title>Cloning and sequencing of the cellulose synthase catalytic subunit gene of Acetobacter xylinum.</title>
        <authorList>
            <person name="Saxena I.M."/>
            <person name="Lin F.C."/>
            <person name="Brown R.M. Jr."/>
        </authorList>
    </citation>
    <scope>NUCLEOTIDE SEQUENCE [GENOMIC DNA]</scope>
    <scope>PROTEIN SEQUENCE OF 6-20</scope>
    <source>
        <strain>ATCC 53582 / NQ5</strain>
    </source>
</reference>
<reference key="2">
    <citation type="journal article" date="1991" name="Plant Mol. Biol.">
        <title>Identification of a new gene in an operon for cellulose biosynthesis in Acetobacter xylinum.</title>
        <authorList>
            <person name="Saxena I.M."/>
            <person name="Lin F.C."/>
            <person name="Brown R.M. Jr."/>
        </authorList>
    </citation>
    <scope>NUCLEOTIDE SEQUENCE [GENOMIC DNA]</scope>
    <scope>PROTEIN SEQUENCE OF 768-781</scope>
    <source>
        <strain>ATCC 53582 / NQ5</strain>
    </source>
</reference>
<reference key="3">
    <citation type="journal article" date="1994" name="J. Bacteriol.">
        <title>Characterization of genes in the cellulose-synthesizing operon (acs operon) of Acetobacter xylinum: implications for cellulose crystallization.</title>
        <authorList>
            <person name="Saxena I.M."/>
            <person name="Kudlicka K."/>
            <person name="Okuda K."/>
            <person name="Brown R.M. Jr."/>
        </authorList>
    </citation>
    <scope>SEQUENCE REVISION</scope>
    <source>
        <strain>ATCC 53582 / NQ5</strain>
    </source>
</reference>
<reference key="4">
    <citation type="journal article" date="1990" name="J. Biol. Chem.">
        <title>Identification of the uridine 5'-diphosphoglucose (UDP-Glc) binding subunit of cellulose synthase in Acetobacter xylinum using the photoaffinity probe 5-azido-UDP-Glc.</title>
        <authorList>
            <person name="Lin F.C."/>
            <person name="Brown R.M. Jr."/>
            <person name="Drake R.R. Jr."/>
            <person name="Haley B.E."/>
        </authorList>
    </citation>
    <scope>FUNCTION</scope>
    <scope>ACTIVITY REGULATION</scope>
    <source>
        <strain>ATCC 53582 / NQ5</strain>
    </source>
</reference>
<reference key="5">
    <citation type="journal article" date="1995" name="J. Bacteriol.">
        <title>Multidomain architecture of beta-glycosyl transferases: implications for mechanism of action.</title>
        <authorList>
            <person name="Saxena I.M."/>
            <person name="Brown R.M. Jr."/>
            <person name="Fevre M."/>
            <person name="Geremia R.A."/>
            <person name="Henrissat B."/>
        </authorList>
    </citation>
    <scope>REVIEW ON DOMAIN ARCHITECTURE</scope>
</reference>